<evidence type="ECO:0000255" key="1">
    <source>
        <dbReference type="HAMAP-Rule" id="MF_00823"/>
    </source>
</evidence>
<evidence type="ECO:0000255" key="2">
    <source>
        <dbReference type="PROSITE-ProRule" id="PRU01137"/>
    </source>
</evidence>
<protein>
    <recommendedName>
        <fullName evidence="1">Acetyl-coenzyme A carboxylase carboxyl transferase subunit alpha</fullName>
        <shortName evidence="1">ACCase subunit alpha</shortName>
        <shortName evidence="1">Acetyl-CoA carboxylase carboxyltransferase subunit alpha</shortName>
        <ecNumber evidence="1">2.1.3.15</ecNumber>
    </recommendedName>
</protein>
<gene>
    <name evidence="1" type="primary">accA</name>
    <name type="ordered locus">CTLon_0513</name>
</gene>
<organism>
    <name type="scientific">Chlamydia trachomatis serovar L2b (strain UCH-1/proctitis)</name>
    <dbReference type="NCBI Taxonomy" id="471473"/>
    <lineage>
        <taxon>Bacteria</taxon>
        <taxon>Pseudomonadati</taxon>
        <taxon>Chlamydiota</taxon>
        <taxon>Chlamydiia</taxon>
        <taxon>Chlamydiales</taxon>
        <taxon>Chlamydiaceae</taxon>
        <taxon>Chlamydia/Chlamydophila group</taxon>
        <taxon>Chlamydia</taxon>
    </lineage>
</organism>
<sequence>MELLPHEKQVVEYEKTIAEFKEKNKENSLLSSSEIQKLDKRLDRLKEKIYSDLTPWERVQICRHPSRPRTVNYIEGMCEEFVELCGDRTFRDDPAVVGGFAKIQGQRFMLIGQEKGCDTKSRMHRNFGMLCPEGFRKALRLAKMAEKFGLPIIFLVDTPGAFPGLTAEERGQGWAIATNLFELARLATPIIVIVIGEGCSGGALGMAIGDVVAMLEHSYYSVISPEGCASILWKDPKKNSDAAAMLKMHGEDLKGFAIVDAVIKEPIGGAHHNPAATYRSVQEYVLQEWVKLKDLPVEELLEKRYQKFRTIGLYETSSESDSEA</sequence>
<name>ACCA_CHLTB</name>
<comment type="function">
    <text evidence="1">Component of the acetyl coenzyme A carboxylase (ACC) complex. First, biotin carboxylase catalyzes the carboxylation of biotin on its carrier protein (BCCP) and then the CO(2) group is transferred by the carboxyltransferase to acetyl-CoA to form malonyl-CoA.</text>
</comment>
<comment type="catalytic activity">
    <reaction evidence="1">
        <text>N(6)-carboxybiotinyl-L-lysyl-[protein] + acetyl-CoA = N(6)-biotinyl-L-lysyl-[protein] + malonyl-CoA</text>
        <dbReference type="Rhea" id="RHEA:54728"/>
        <dbReference type="Rhea" id="RHEA-COMP:10505"/>
        <dbReference type="Rhea" id="RHEA-COMP:10506"/>
        <dbReference type="ChEBI" id="CHEBI:57288"/>
        <dbReference type="ChEBI" id="CHEBI:57384"/>
        <dbReference type="ChEBI" id="CHEBI:83144"/>
        <dbReference type="ChEBI" id="CHEBI:83145"/>
        <dbReference type="EC" id="2.1.3.15"/>
    </reaction>
</comment>
<comment type="pathway">
    <text evidence="1">Lipid metabolism; malonyl-CoA biosynthesis; malonyl-CoA from acetyl-CoA: step 1/1.</text>
</comment>
<comment type="subunit">
    <text evidence="1">Acetyl-CoA carboxylase is a heterohexamer composed of biotin carboxyl carrier protein (AccB), biotin carboxylase (AccC) and two subunits each of ACCase subunit alpha (AccA) and ACCase subunit beta (AccD).</text>
</comment>
<comment type="subcellular location">
    <subcellularLocation>
        <location evidence="1">Cytoplasm</location>
    </subcellularLocation>
</comment>
<comment type="similarity">
    <text evidence="1">Belongs to the AccA family.</text>
</comment>
<accession>B0BBP6</accession>
<feature type="chain" id="PRO_1000134473" description="Acetyl-coenzyme A carboxylase carboxyl transferase subunit alpha">
    <location>
        <begin position="1"/>
        <end position="324"/>
    </location>
</feature>
<feature type="domain" description="CoA carboxyltransferase C-terminal" evidence="2">
    <location>
        <begin position="37"/>
        <end position="291"/>
    </location>
</feature>
<proteinExistence type="inferred from homology"/>
<dbReference type="EC" id="2.1.3.15" evidence="1"/>
<dbReference type="EMBL" id="AM884177">
    <property type="protein sequence ID" value="CAP06911.1"/>
    <property type="molecule type" value="Genomic_DNA"/>
</dbReference>
<dbReference type="RefSeq" id="WP_009873685.1">
    <property type="nucleotide sequence ID" value="NC_010280.2"/>
</dbReference>
<dbReference type="SMR" id="B0BBP6"/>
<dbReference type="KEGG" id="ctl:CTLon_0513"/>
<dbReference type="HOGENOM" id="CLU_015486_0_2_0"/>
<dbReference type="UniPathway" id="UPA00655">
    <property type="reaction ID" value="UER00711"/>
</dbReference>
<dbReference type="Proteomes" id="UP001154401">
    <property type="component" value="Chromosome"/>
</dbReference>
<dbReference type="GO" id="GO:0009317">
    <property type="term" value="C:acetyl-CoA carboxylase complex"/>
    <property type="evidence" value="ECO:0007669"/>
    <property type="project" value="InterPro"/>
</dbReference>
<dbReference type="GO" id="GO:0003989">
    <property type="term" value="F:acetyl-CoA carboxylase activity"/>
    <property type="evidence" value="ECO:0007669"/>
    <property type="project" value="InterPro"/>
</dbReference>
<dbReference type="GO" id="GO:0005524">
    <property type="term" value="F:ATP binding"/>
    <property type="evidence" value="ECO:0007669"/>
    <property type="project" value="UniProtKB-KW"/>
</dbReference>
<dbReference type="GO" id="GO:0016743">
    <property type="term" value="F:carboxyl- or carbamoyltransferase activity"/>
    <property type="evidence" value="ECO:0007669"/>
    <property type="project" value="UniProtKB-UniRule"/>
</dbReference>
<dbReference type="GO" id="GO:0006633">
    <property type="term" value="P:fatty acid biosynthetic process"/>
    <property type="evidence" value="ECO:0007669"/>
    <property type="project" value="UniProtKB-KW"/>
</dbReference>
<dbReference type="GO" id="GO:2001295">
    <property type="term" value="P:malonyl-CoA biosynthetic process"/>
    <property type="evidence" value="ECO:0007669"/>
    <property type="project" value="UniProtKB-UniRule"/>
</dbReference>
<dbReference type="Gene3D" id="3.90.226.10">
    <property type="entry name" value="2-enoyl-CoA Hydratase, Chain A, domain 1"/>
    <property type="match status" value="1"/>
</dbReference>
<dbReference type="HAMAP" id="MF_00823">
    <property type="entry name" value="AcetylCoA_CT_alpha"/>
    <property type="match status" value="1"/>
</dbReference>
<dbReference type="InterPro" id="IPR001095">
    <property type="entry name" value="Acetyl_CoA_COase_a_su"/>
</dbReference>
<dbReference type="InterPro" id="IPR029045">
    <property type="entry name" value="ClpP/crotonase-like_dom_sf"/>
</dbReference>
<dbReference type="InterPro" id="IPR011763">
    <property type="entry name" value="COA_CT_C"/>
</dbReference>
<dbReference type="NCBIfam" id="TIGR00513">
    <property type="entry name" value="accA"/>
    <property type="match status" value="1"/>
</dbReference>
<dbReference type="NCBIfam" id="NF041504">
    <property type="entry name" value="AccA_sub"/>
    <property type="match status" value="1"/>
</dbReference>
<dbReference type="NCBIfam" id="NF004344">
    <property type="entry name" value="PRK05724.1"/>
    <property type="match status" value="1"/>
</dbReference>
<dbReference type="PANTHER" id="PTHR42853">
    <property type="entry name" value="ACETYL-COENZYME A CARBOXYLASE CARBOXYL TRANSFERASE SUBUNIT ALPHA"/>
    <property type="match status" value="1"/>
</dbReference>
<dbReference type="PANTHER" id="PTHR42853:SF3">
    <property type="entry name" value="ACETYL-COENZYME A CARBOXYLASE CARBOXYL TRANSFERASE SUBUNIT ALPHA, CHLOROPLASTIC"/>
    <property type="match status" value="1"/>
</dbReference>
<dbReference type="Pfam" id="PF03255">
    <property type="entry name" value="ACCA"/>
    <property type="match status" value="1"/>
</dbReference>
<dbReference type="PRINTS" id="PR01069">
    <property type="entry name" value="ACCCTRFRASEA"/>
</dbReference>
<dbReference type="SUPFAM" id="SSF52096">
    <property type="entry name" value="ClpP/crotonase"/>
    <property type="match status" value="1"/>
</dbReference>
<dbReference type="PROSITE" id="PS50989">
    <property type="entry name" value="COA_CT_CTER"/>
    <property type="match status" value="1"/>
</dbReference>
<reference key="1">
    <citation type="journal article" date="2008" name="Genome Res.">
        <title>Chlamydia trachomatis: genome sequence analysis of lymphogranuloma venereum isolates.</title>
        <authorList>
            <person name="Thomson N.R."/>
            <person name="Holden M.T.G."/>
            <person name="Carder C."/>
            <person name="Lennard N."/>
            <person name="Lockey S.J."/>
            <person name="Marsh P."/>
            <person name="Skipp P."/>
            <person name="O'Connor C.D."/>
            <person name="Goodhead I."/>
            <person name="Norbertzcak H."/>
            <person name="Harris B."/>
            <person name="Ormond D."/>
            <person name="Rance R."/>
            <person name="Quail M.A."/>
            <person name="Parkhill J."/>
            <person name="Stephens R.S."/>
            <person name="Clarke I.N."/>
        </authorList>
    </citation>
    <scope>NUCLEOTIDE SEQUENCE [LARGE SCALE GENOMIC DNA]</scope>
    <source>
        <strain>UCH-1/proctitis</strain>
    </source>
</reference>
<keyword id="KW-0067">ATP-binding</keyword>
<keyword id="KW-0963">Cytoplasm</keyword>
<keyword id="KW-0275">Fatty acid biosynthesis</keyword>
<keyword id="KW-0276">Fatty acid metabolism</keyword>
<keyword id="KW-0444">Lipid biosynthesis</keyword>
<keyword id="KW-0443">Lipid metabolism</keyword>
<keyword id="KW-0547">Nucleotide-binding</keyword>
<keyword id="KW-0808">Transferase</keyword>